<comment type="function">
    <text evidence="2 6">ATPase component of the type II secretion system required for the energy-dependent secretion of extracellular factors such as proteases and toxins from the periplasm. Acts as a molecular motor to provide the energy that is required for assembly of the pseudopilus and the extrusion of substrates generated in the cytoplasm.</text>
</comment>
<comment type="catalytic activity">
    <reaction evidence="2 6">
        <text>ATP + H2O + cellular proteinSide 1 = ADP + phosphate + cellular proteinSide 2.</text>
        <dbReference type="EC" id="7.4.2.8"/>
    </reaction>
</comment>
<comment type="cofactor">
    <cofactor>
        <name>Zn(2+)</name>
        <dbReference type="ChEBI" id="CHEBI:29105"/>
    </cofactor>
    <text evidence="2 6">Removal of zinc reduces the enzymatic activity by about 2-fold.</text>
</comment>
<comment type="subunit">
    <text evidence="2 3 5 8">Forms homooligomers; most probably hexamers (Probable) (PubMed:15601709, PubMed:23954505). Interacts with EpsL/GspL (PubMed:15843017).</text>
</comment>
<comment type="subcellular location">
    <subcellularLocation>
        <location evidence="1">Cell inner membrane</location>
    </subcellularLocation>
    <text evidence="1">Membrane association is not an intrinsic property but requires the EpsL/GspL gene product.</text>
</comment>
<comment type="disruption phenotype">
    <text evidence="6">Deletion mutants show complete loss of protease secretion.</text>
</comment>
<comment type="similarity">
    <text evidence="7">Belongs to the GSP E family.</text>
</comment>
<proteinExistence type="evidence at protein level"/>
<name>GSPE_VIBCH</name>
<evidence type="ECO:0000250" key="1">
    <source>
        <dbReference type="UniProtKB" id="Q00512"/>
    </source>
</evidence>
<evidence type="ECO:0000269" key="2">
    <source>
    </source>
</evidence>
<evidence type="ECO:0000269" key="3">
    <source>
    </source>
</evidence>
<evidence type="ECO:0000269" key="4">
    <source>
    </source>
</evidence>
<evidence type="ECO:0000269" key="5">
    <source>
    </source>
</evidence>
<evidence type="ECO:0000269" key="6">
    <source>
    </source>
</evidence>
<evidence type="ECO:0000305" key="7"/>
<evidence type="ECO:0000305" key="8">
    <source>
    </source>
</evidence>
<evidence type="ECO:0007744" key="9">
    <source>
        <dbReference type="PDB" id="1P9R"/>
    </source>
</evidence>
<evidence type="ECO:0007744" key="10">
    <source>
        <dbReference type="PDB" id="1P9W"/>
    </source>
</evidence>
<evidence type="ECO:0007829" key="11">
    <source>
        <dbReference type="PDB" id="1P9R"/>
    </source>
</evidence>
<evidence type="ECO:0007829" key="12">
    <source>
        <dbReference type="PDB" id="2BH1"/>
    </source>
</evidence>
<accession>P37093</accession>
<accession>Q9JPZ4</accession>
<gene>
    <name type="primary">epsE</name>
    <name type="ordered locus">VC_2732</name>
</gene>
<protein>
    <recommendedName>
        <fullName>Type II secretion system ATPase E</fullName>
        <shortName>T2SS protein E</shortName>
        <ecNumber evidence="2 6">7.4.2.8</ecNumber>
    </recommendedName>
    <alternativeName>
        <fullName>Cholera toxin secretion protein EpsE</fullName>
    </alternativeName>
    <alternativeName>
        <fullName>General secretion pathway protein E</fullName>
    </alternativeName>
    <alternativeName>
        <fullName>Type II traffic warden ATPase</fullName>
    </alternativeName>
</protein>
<feature type="chain" id="PRO_0000207290" description="Type II secretion system ATPase E">
    <location>
        <begin position="1"/>
        <end position="503"/>
    </location>
</feature>
<feature type="binding site" evidence="9 10">
    <location>
        <position position="397"/>
    </location>
    <ligand>
        <name>Zn(2+)</name>
        <dbReference type="ChEBI" id="CHEBI:29105"/>
    </ligand>
</feature>
<feature type="binding site" evidence="9 10">
    <location>
        <position position="400"/>
    </location>
    <ligand>
        <name>Zn(2+)</name>
        <dbReference type="ChEBI" id="CHEBI:29105"/>
    </ligand>
</feature>
<feature type="binding site" evidence="9 10">
    <location>
        <position position="430"/>
    </location>
    <ligand>
        <name>Zn(2+)</name>
        <dbReference type="ChEBI" id="CHEBI:29105"/>
    </ligand>
</feature>
<feature type="binding site" evidence="9 10">
    <location>
        <position position="433"/>
    </location>
    <ligand>
        <name>Zn(2+)</name>
        <dbReference type="ChEBI" id="CHEBI:29105"/>
    </ligand>
</feature>
<feature type="mutagenesis site" description="More than 95% loss of protease secretion." evidence="4">
    <original>R</original>
    <variation>A</variation>
    <location>
        <position position="210"/>
    </location>
</feature>
<feature type="mutagenesis site" description="More than 95% loss of protease secretion." evidence="4">
    <original>R</original>
    <variation>A</variation>
    <location>
        <position position="225"/>
    </location>
</feature>
<feature type="mutagenesis site" description="About 3-fold loss of ATP hydrolysis." evidence="2">
    <original>K</original>
    <variation>A</variation>
    <location>
        <position position="270"/>
    </location>
</feature>
<feature type="mutagenesis site" description="More than 95% loss of protease secretion." evidence="4">
    <original>R</original>
    <variation>A</variation>
    <location>
        <position position="324"/>
    </location>
</feature>
<feature type="mutagenesis site" description="More than 95% loss of protease secretion." evidence="4">
    <original>R</original>
    <variation>A</variation>
    <location>
        <position position="336"/>
    </location>
</feature>
<feature type="helix" evidence="12">
    <location>
        <begin position="19"/>
        <end position="25"/>
    </location>
</feature>
<feature type="strand" evidence="12">
    <location>
        <begin position="27"/>
        <end position="31"/>
    </location>
</feature>
<feature type="strand" evidence="12">
    <location>
        <begin position="33"/>
        <end position="35"/>
    </location>
</feature>
<feature type="strand" evidence="12">
    <location>
        <begin position="38"/>
        <end position="42"/>
    </location>
</feature>
<feature type="helix" evidence="12">
    <location>
        <begin position="48"/>
        <end position="58"/>
    </location>
</feature>
<feature type="strand" evidence="12">
    <location>
        <begin position="62"/>
        <end position="66"/>
    </location>
</feature>
<feature type="helix" evidence="12">
    <location>
        <begin position="69"/>
        <end position="79"/>
    </location>
</feature>
<feature type="helix" evidence="11">
    <location>
        <begin position="101"/>
        <end position="106"/>
    </location>
</feature>
<feature type="helix" evidence="11">
    <location>
        <begin position="122"/>
        <end position="137"/>
    </location>
</feature>
<feature type="strand" evidence="11">
    <location>
        <begin position="140"/>
        <end position="147"/>
    </location>
</feature>
<feature type="strand" evidence="11">
    <location>
        <begin position="150"/>
        <end position="157"/>
    </location>
</feature>
<feature type="strand" evidence="11">
    <location>
        <begin position="160"/>
        <end position="165"/>
    </location>
</feature>
<feature type="helix" evidence="11">
    <location>
        <begin position="169"/>
        <end position="171"/>
    </location>
</feature>
<feature type="helix" evidence="11">
    <location>
        <begin position="172"/>
        <end position="182"/>
    </location>
</feature>
<feature type="strand" evidence="11">
    <location>
        <begin position="194"/>
        <end position="199"/>
    </location>
</feature>
<feature type="strand" evidence="11">
    <location>
        <begin position="207"/>
        <end position="214"/>
    </location>
</feature>
<feature type="strand" evidence="11">
    <location>
        <begin position="221"/>
        <end position="224"/>
    </location>
</feature>
<feature type="turn" evidence="11">
    <location>
        <begin position="229"/>
        <end position="232"/>
    </location>
</feature>
<feature type="helix" evidence="11">
    <location>
        <begin position="236"/>
        <end position="238"/>
    </location>
</feature>
<feature type="helix" evidence="11">
    <location>
        <begin position="243"/>
        <end position="253"/>
    </location>
</feature>
<feature type="strand" evidence="11">
    <location>
        <begin position="255"/>
        <end position="263"/>
    </location>
</feature>
<feature type="helix" evidence="11">
    <location>
        <begin position="270"/>
        <end position="281"/>
    </location>
</feature>
<feature type="strand" evidence="11">
    <location>
        <begin position="288"/>
        <end position="294"/>
    </location>
</feature>
<feature type="strand" evidence="11">
    <location>
        <begin position="300"/>
        <end position="306"/>
    </location>
</feature>
<feature type="helix" evidence="11">
    <location>
        <begin position="309"/>
        <end position="311"/>
    </location>
</feature>
<feature type="helix" evidence="11">
    <location>
        <begin position="315"/>
        <end position="322"/>
    </location>
</feature>
<feature type="helix" evidence="11">
    <location>
        <begin position="323"/>
        <end position="325"/>
    </location>
</feature>
<feature type="strand" evidence="11">
    <location>
        <begin position="328"/>
        <end position="333"/>
    </location>
</feature>
<feature type="helix" evidence="11">
    <location>
        <begin position="338"/>
        <end position="349"/>
    </location>
</feature>
<feature type="strand" evidence="11">
    <location>
        <begin position="353"/>
        <end position="358"/>
    </location>
</feature>
<feature type="strand" evidence="11">
    <location>
        <begin position="361"/>
        <end position="363"/>
    </location>
</feature>
<feature type="helix" evidence="11">
    <location>
        <begin position="364"/>
        <end position="373"/>
    </location>
</feature>
<feature type="helix" evidence="11">
    <location>
        <begin position="377"/>
        <end position="383"/>
    </location>
</feature>
<feature type="strand" evidence="11">
    <location>
        <begin position="384"/>
        <end position="396"/>
    </location>
</feature>
<feature type="turn" evidence="11">
    <location>
        <begin position="398"/>
        <end position="400"/>
    </location>
</feature>
<feature type="strand" evidence="11">
    <location>
        <begin position="402"/>
        <end position="405"/>
    </location>
</feature>
<feature type="helix" evidence="11">
    <location>
        <begin position="408"/>
        <end position="411"/>
    </location>
</feature>
<feature type="strand" evidence="11">
    <location>
        <begin position="423"/>
        <end position="426"/>
    </location>
</feature>
<feature type="strand" evidence="11">
    <location>
        <begin position="431"/>
        <end position="433"/>
    </location>
</feature>
<feature type="strand" evidence="11">
    <location>
        <begin position="435"/>
        <end position="449"/>
    </location>
</feature>
<feature type="helix" evidence="11">
    <location>
        <begin position="452"/>
        <end position="459"/>
    </location>
</feature>
<feature type="helix" evidence="11">
    <location>
        <begin position="464"/>
        <end position="472"/>
    </location>
</feature>
<feature type="helix" evidence="11">
    <location>
        <begin position="478"/>
        <end position="487"/>
    </location>
</feature>
<feature type="helix" evidence="11">
    <location>
        <begin position="493"/>
        <end position="498"/>
    </location>
</feature>
<organism>
    <name type="scientific">Vibrio cholerae serotype O1 (strain ATCC 39315 / El Tor Inaba N16961)</name>
    <dbReference type="NCBI Taxonomy" id="243277"/>
    <lineage>
        <taxon>Bacteria</taxon>
        <taxon>Pseudomonadati</taxon>
        <taxon>Pseudomonadota</taxon>
        <taxon>Gammaproteobacteria</taxon>
        <taxon>Vibrionales</taxon>
        <taxon>Vibrionaceae</taxon>
        <taxon>Vibrio</taxon>
    </lineage>
</organism>
<dbReference type="EC" id="7.4.2.8" evidence="2 6"/>
<dbReference type="EMBL" id="M96172">
    <property type="protein sequence ID" value="AAA27518.1"/>
    <property type="molecule type" value="Genomic_DNA"/>
</dbReference>
<dbReference type="EMBL" id="L33796">
    <property type="protein sequence ID" value="AAA58786.1"/>
    <property type="molecule type" value="Genomic_DNA"/>
</dbReference>
<dbReference type="EMBL" id="AE003852">
    <property type="protein sequence ID" value="AAF95872.1"/>
    <property type="molecule type" value="Genomic_DNA"/>
</dbReference>
<dbReference type="PIR" id="JU0147">
    <property type="entry name" value="JU0147"/>
</dbReference>
<dbReference type="RefSeq" id="NP_232359.1">
    <property type="nucleotide sequence ID" value="NC_002505.1"/>
</dbReference>
<dbReference type="PDB" id="1P9R">
    <property type="method" value="X-ray"/>
    <property type="resolution" value="2.50 A"/>
    <property type="chains" value="A=91-498"/>
</dbReference>
<dbReference type="PDB" id="1P9W">
    <property type="method" value="X-ray"/>
    <property type="resolution" value="2.70 A"/>
    <property type="chains" value="A=91-498"/>
</dbReference>
<dbReference type="PDB" id="2BH1">
    <property type="method" value="X-ray"/>
    <property type="resolution" value="2.40 A"/>
    <property type="chains" value="X/Y=1-96"/>
</dbReference>
<dbReference type="PDB" id="4KSR">
    <property type="method" value="X-ray"/>
    <property type="resolution" value="4.20 A"/>
    <property type="chains" value="A/B/C=100-503"/>
</dbReference>
<dbReference type="PDB" id="4KSS">
    <property type="method" value="X-ray"/>
    <property type="resolution" value="7.58 A"/>
    <property type="chains" value="A/B/C/D/E/F=100-503"/>
</dbReference>
<dbReference type="PDBsum" id="1P9R"/>
<dbReference type="PDBsum" id="1P9W"/>
<dbReference type="PDBsum" id="2BH1"/>
<dbReference type="PDBsum" id="4KSR"/>
<dbReference type="PDBsum" id="4KSS"/>
<dbReference type="SMR" id="P37093"/>
<dbReference type="STRING" id="243277.VC_2732"/>
<dbReference type="DrugBank" id="DB04395">
    <property type="generic name" value="Phosphoaminophosphonic Acid-Adenylate Ester"/>
</dbReference>
<dbReference type="DNASU" id="2614895"/>
<dbReference type="EnsemblBacteria" id="AAF95872">
    <property type="protein sequence ID" value="AAF95872"/>
    <property type="gene ID" value="VC_2732"/>
</dbReference>
<dbReference type="KEGG" id="vch:VC_2732"/>
<dbReference type="PATRIC" id="fig|243277.26.peg.2607"/>
<dbReference type="eggNOG" id="COG2804">
    <property type="taxonomic scope" value="Bacteria"/>
</dbReference>
<dbReference type="HOGENOM" id="CLU_013446_10_3_6"/>
<dbReference type="BRENDA" id="7.4.2.8">
    <property type="organism ID" value="6626"/>
</dbReference>
<dbReference type="EvolutionaryTrace" id="P37093"/>
<dbReference type="Proteomes" id="UP000000584">
    <property type="component" value="Chromosome 1"/>
</dbReference>
<dbReference type="GO" id="GO:0005886">
    <property type="term" value="C:plasma membrane"/>
    <property type="evidence" value="ECO:0000318"/>
    <property type="project" value="GO_Central"/>
</dbReference>
<dbReference type="GO" id="GO:0015627">
    <property type="term" value="C:type II protein secretion system complex"/>
    <property type="evidence" value="ECO:0000318"/>
    <property type="project" value="GO_Central"/>
</dbReference>
<dbReference type="GO" id="GO:0005524">
    <property type="term" value="F:ATP binding"/>
    <property type="evidence" value="ECO:0007669"/>
    <property type="project" value="UniProtKB-KW"/>
</dbReference>
<dbReference type="GO" id="GO:0016887">
    <property type="term" value="F:ATP hydrolysis activity"/>
    <property type="evidence" value="ECO:0000318"/>
    <property type="project" value="GO_Central"/>
</dbReference>
<dbReference type="GO" id="GO:0046872">
    <property type="term" value="F:metal ion binding"/>
    <property type="evidence" value="ECO:0007669"/>
    <property type="project" value="UniProtKB-KW"/>
</dbReference>
<dbReference type="GO" id="GO:0008564">
    <property type="term" value="F:protein-exporting ATPase activity"/>
    <property type="evidence" value="ECO:0007669"/>
    <property type="project" value="UniProtKB-EC"/>
</dbReference>
<dbReference type="GO" id="GO:0015628">
    <property type="term" value="P:protein secretion by the type II secretion system"/>
    <property type="evidence" value="ECO:0000318"/>
    <property type="project" value="GO_Central"/>
</dbReference>
<dbReference type="CDD" id="cd01129">
    <property type="entry name" value="PulE-GspE-like"/>
    <property type="match status" value="1"/>
</dbReference>
<dbReference type="FunFam" id="3.30.450.90:FF:000001">
    <property type="entry name" value="Type II secretion system ATPase GspE"/>
    <property type="match status" value="1"/>
</dbReference>
<dbReference type="FunFam" id="3.40.50.300:FF:000398">
    <property type="entry name" value="Type IV pilus assembly ATPase PilB"/>
    <property type="match status" value="1"/>
</dbReference>
<dbReference type="Gene3D" id="3.30.450.90">
    <property type="match status" value="1"/>
</dbReference>
<dbReference type="Gene3D" id="3.40.50.300">
    <property type="entry name" value="P-loop containing nucleotide triphosphate hydrolases"/>
    <property type="match status" value="1"/>
</dbReference>
<dbReference type="Gene3D" id="3.30.300.160">
    <property type="entry name" value="Type II secretion system, protein E, N-terminal domain"/>
    <property type="match status" value="1"/>
</dbReference>
<dbReference type="InterPro" id="IPR003593">
    <property type="entry name" value="AAA+_ATPase"/>
</dbReference>
<dbReference type="InterPro" id="IPR054757">
    <property type="entry name" value="GSPE_N1E"/>
</dbReference>
<dbReference type="InterPro" id="IPR027417">
    <property type="entry name" value="P-loop_NTPase"/>
</dbReference>
<dbReference type="InterPro" id="IPR001482">
    <property type="entry name" value="T2SS/T4SS_dom"/>
</dbReference>
<dbReference type="InterPro" id="IPR037257">
    <property type="entry name" value="T2SS_E_N_sf"/>
</dbReference>
<dbReference type="InterPro" id="IPR013369">
    <property type="entry name" value="T2SS_GspE"/>
</dbReference>
<dbReference type="NCBIfam" id="TIGR02533">
    <property type="entry name" value="type_II_gspE"/>
    <property type="match status" value="1"/>
</dbReference>
<dbReference type="PANTHER" id="PTHR30258:SF27">
    <property type="entry name" value="BACTERIOPHAGE ADSORPTION PROTEIN B-RELATED"/>
    <property type="match status" value="1"/>
</dbReference>
<dbReference type="PANTHER" id="PTHR30258">
    <property type="entry name" value="TYPE II SECRETION SYSTEM PROTEIN GSPE-RELATED"/>
    <property type="match status" value="1"/>
</dbReference>
<dbReference type="Pfam" id="PF22341">
    <property type="entry name" value="GSPE_N1E"/>
    <property type="match status" value="1"/>
</dbReference>
<dbReference type="Pfam" id="PF00437">
    <property type="entry name" value="T2SSE"/>
    <property type="match status" value="1"/>
</dbReference>
<dbReference type="SMART" id="SM00382">
    <property type="entry name" value="AAA"/>
    <property type="match status" value="1"/>
</dbReference>
<dbReference type="SUPFAM" id="SSF160246">
    <property type="entry name" value="EspE N-terminal domain-like"/>
    <property type="match status" value="1"/>
</dbReference>
<dbReference type="SUPFAM" id="SSF52540">
    <property type="entry name" value="P-loop containing nucleoside triphosphate hydrolases"/>
    <property type="match status" value="1"/>
</dbReference>
<dbReference type="PROSITE" id="PS00662">
    <property type="entry name" value="T2SP_E"/>
    <property type="match status" value="1"/>
</dbReference>
<keyword id="KW-0002">3D-structure</keyword>
<keyword id="KW-0067">ATP-binding</keyword>
<keyword id="KW-0997">Cell inner membrane</keyword>
<keyword id="KW-1003">Cell membrane</keyword>
<keyword id="KW-0472">Membrane</keyword>
<keyword id="KW-0479">Metal-binding</keyword>
<keyword id="KW-0547">Nucleotide-binding</keyword>
<keyword id="KW-0653">Protein transport</keyword>
<keyword id="KW-1185">Reference proteome</keyword>
<keyword id="KW-1278">Translocase</keyword>
<keyword id="KW-0813">Transport</keyword>
<keyword id="KW-0862">Zinc</keyword>
<sequence>MTEMVISPAERQSIRRLPFSFANRFKLVLDWNEDFSQASIYYLAPLSMEALVETKRVVKHAFQLIELSQAEFESKLTQVYQRDSSEARQLMEDIGADSDDFFSLAEELPQNEDLLESEDDAPIIKLINAMLGEAIKEGASDIHIETFEKTLSIRFRVDGVLREVLAPSRKLSSLLVSRVKVMAKLDIAEKRVPQDGRISLRIGGRAVDVRVSTMPSSHGERVVMRLLDKNATRLDLHSLGMTAHNHDNFRRLIKRPHGIILVTGPTGSGKSTTLYAGLQELNSSERNILTVEDPIEFDIDGIGQTQVNPRVDMTFARGLRAILRQDPDVVMVGEIRDLETAQIAVQASLTGHLVMSTLHTNTAVGAVTRLRDMGIEPFLISSSLLGVLAQRLVRTLCPDCKEPYEADKEQRKLFDSKKKEPLILYRATGCPKCNHKGYRGRTGIHELLLVDDALQELIHSEAGEQAMEKHIRATTPSIRDDGLDKVRQGITSLEEVMRVTKES</sequence>
<reference key="1">
    <citation type="journal article" date="1993" name="Gene">
        <title>A protein required for secretion of cholera toxin through the outer membrane of Vibrio cholerae.</title>
        <authorList>
            <person name="Sandkvist M."/>
            <person name="Morales V."/>
            <person name="Bagdasarian M.M."/>
        </authorList>
    </citation>
    <scope>NUCLEOTIDE SEQUENCE [GENOMIC DNA]</scope>
    <source>
        <strain>El Tor TRH7000</strain>
    </source>
</reference>
<reference key="2">
    <citation type="journal article" date="2000" name="Nature">
        <title>DNA sequence of both chromosomes of the cholera pathogen Vibrio cholerae.</title>
        <authorList>
            <person name="Heidelberg J.F."/>
            <person name="Eisen J.A."/>
            <person name="Nelson W.C."/>
            <person name="Clayton R.A."/>
            <person name="Gwinn M.L."/>
            <person name="Dodson R.J."/>
            <person name="Haft D.H."/>
            <person name="Hickey E.K."/>
            <person name="Peterson J.D."/>
            <person name="Umayam L.A."/>
            <person name="Gill S.R."/>
            <person name="Nelson K.E."/>
            <person name="Read T.D."/>
            <person name="Tettelin H."/>
            <person name="Richardson D.L."/>
            <person name="Ermolaeva M.D."/>
            <person name="Vamathevan J.J."/>
            <person name="Bass S."/>
            <person name="Qin H."/>
            <person name="Dragoi I."/>
            <person name="Sellers P."/>
            <person name="McDonald L.A."/>
            <person name="Utterback T.R."/>
            <person name="Fleischmann R.D."/>
            <person name="Nierman W.C."/>
            <person name="White O."/>
            <person name="Salzberg S.L."/>
            <person name="Smith H.O."/>
            <person name="Colwell R.R."/>
            <person name="Mekalanos J.J."/>
            <person name="Venter J.C."/>
            <person name="Fraser C.M."/>
        </authorList>
    </citation>
    <scope>NUCLEOTIDE SEQUENCE [LARGE SCALE GENOMIC DNA]</scope>
    <source>
        <strain>ATCC 39315 / El Tor Inaba N16961</strain>
    </source>
</reference>
<reference key="3">
    <citation type="journal article" date="2005" name="J. Bacteriol.">
        <title>Molecular analysis of the Vibrio cholerae type II secretion ATPase EpsE.</title>
        <authorList>
            <person name="Camberg J.L."/>
            <person name="Sandkvist M."/>
        </authorList>
    </citation>
    <scope>FUNCTION</scope>
    <scope>ATPASE ACTIVITY</scope>
    <scope>CATALYTIC ACTIVITY</scope>
    <scope>MUTAGENESIS OF LYS-270</scope>
    <scope>SUBUNIT</scope>
    <scope>COFACTOR</scope>
</reference>
<reference key="4">
    <citation type="journal article" date="2011" name="J. Biol. Chem.">
        <title>Oligomerization of EpsE coordinates residues from multiple subunits to facilitate ATPase activity.</title>
        <authorList>
            <person name="Patrick M."/>
            <person name="Korotkov K.V."/>
            <person name="Hol W.G."/>
            <person name="Sandkvist M."/>
        </authorList>
    </citation>
    <scope>SUBUNIT</scope>
    <scope>MUTAGENESIS OF ARG-210; ARG-225; ARG-324 AND ARG-336</scope>
</reference>
<reference key="5">
    <citation type="journal article" date="2016" name="MicrobiologyOpen">
        <title>Zinc coordination is essential for the function and activity of the type II secretion ATPase EpsE.</title>
        <authorList>
            <person name="Rule C.S."/>
            <person name="Patrick M."/>
            <person name="Camberg J.L."/>
            <person name="Maricic N."/>
            <person name="Hol W.G."/>
            <person name="Sandkvist M."/>
        </authorList>
    </citation>
    <scope>FUNCTION</scope>
    <scope>CATALYTIC ACTIVITY</scope>
    <scope>COFACTOR</scope>
    <scope>DISRUPTION PHENOTYPE</scope>
</reference>
<reference key="6">
    <citation type="journal article" date="2003" name="J. Mol. Biol.">
        <title>Crystal structure of the extracellular protein secretion NTPase EpsE of Vibrio cholerae.</title>
        <authorList>
            <person name="Robien M.A."/>
            <person name="Krumm B.E."/>
            <person name="Sandkvist M."/>
            <person name="Hol W.G."/>
        </authorList>
    </citation>
    <scope>X-RAY CRYSTALLOGRAPHY (2.50 ANGSTROMS) OF 91-498 IN COMPLEX WITH ATP ANALOG AND ZINC</scope>
</reference>
<reference key="7">
    <citation type="journal article" date="2005" name="J. Mol. Biol.">
        <title>The X-ray structure of the type II secretion system complex formed by the N-terminal domain of EpsE and the cytoplasmic domain of EpsL of Vibrio cholerae.</title>
        <authorList>
            <person name="Abendroth J."/>
            <person name="Murphy P."/>
            <person name="Sandkvist M."/>
            <person name="Bagdasarian M."/>
            <person name="Hol W.G."/>
        </authorList>
    </citation>
    <scope>X-RAY CRYSTALLOGRAPHY (2.40 ANGSTROMS) OF 1-96</scope>
    <scope>INTERACTION WITH EPSL</scope>
</reference>
<reference key="8">
    <citation type="journal article" date="2013" name="Structure">
        <title>Hexamers of the type II secretion ATPase GspE from Vibrio cholerae with increased ATPase activity.</title>
        <authorList>
            <person name="Lu C."/>
            <person name="Turley S."/>
            <person name="Marionni S.T."/>
            <person name="Park Y.J."/>
            <person name="Lee K.K."/>
            <person name="Patrick M."/>
            <person name="Shah R."/>
            <person name="Sandkvist M."/>
            <person name="Bush M.F."/>
            <person name="Hol W.G."/>
        </authorList>
    </citation>
    <scope>X-RAY CRYSTALLOGRAPHY (4.20 ANGSTROMS) OF 100-503</scope>
    <scope>SUBUNIT</scope>
</reference>